<name>ILVD_BIFLO</name>
<sequence length="620" mass="66558">MTEMRSAKIMSGRVFAGARALYRAAGVSGDDMGKKPIIAIANSFDEFLPGHVHLNKVGRIVSEAIREAGGIPREFNTMAVDDGIAMGHTGMLYSLPSRDIIADTVEYQCNAHCADALICIPNCDKVVPGMLMAALRLNIPTVFVSGGPMEAGTTVLADGTVKSTDLIDVMYATADDNVSDEELLNYEKTVCPTCGSCAGMFTANSMNCLTEAIGLALPGNGTILASHSYRKDLFKRAAKQVVKIAHQYYDDSDDSVLPRSIATKEAFENAMTMDVAMGGSTNTVLHILAMAQSADVDFTLDDIERISHTVPCICKASPSGKWEISDVHRAGGITGILGELDRAGKLHTNVHSIDYPTLEAKLADWDIMRPTCTEEAQQMYKAAPGHIISPEPWTHTTLFDSLDRDRTNGAIHDINHPEIHEGGLAVLRGNLAPDGCVVKTAGVPPEIWKFRGPALVVDSQEQAIEVILNDTLKPGMALVIRYEGPKGGPGMQEMLYPTSFVKGKGIGKQVAMLTDGRYSGGSSGLAIGHMAPEAANKGPVALIKNGDIIDIDIEARSVNVELTDEQLDERRRELEAGDGYVAHRNRHVSQALKAYAAFARSADKGATRDPELINKLSGLD</sequence>
<gene>
    <name evidence="1" type="primary">ilvD</name>
    <name type="ordered locus">BL1788</name>
</gene>
<organism>
    <name type="scientific">Bifidobacterium longum (strain NCC 2705)</name>
    <dbReference type="NCBI Taxonomy" id="206672"/>
    <lineage>
        <taxon>Bacteria</taxon>
        <taxon>Bacillati</taxon>
        <taxon>Actinomycetota</taxon>
        <taxon>Actinomycetes</taxon>
        <taxon>Bifidobacteriales</taxon>
        <taxon>Bifidobacteriaceae</taxon>
        <taxon>Bifidobacterium</taxon>
    </lineage>
</organism>
<proteinExistence type="inferred from homology"/>
<protein>
    <recommendedName>
        <fullName evidence="1">Dihydroxy-acid dehydratase</fullName>
        <shortName evidence="1">DAD</shortName>
        <ecNumber evidence="1">4.2.1.9</ecNumber>
    </recommendedName>
</protein>
<reference key="1">
    <citation type="journal article" date="2002" name="Proc. Natl. Acad. Sci. U.S.A.">
        <title>The genome sequence of Bifidobacterium longum reflects its adaptation to the human gastrointestinal tract.</title>
        <authorList>
            <person name="Schell M.A."/>
            <person name="Karmirantzou M."/>
            <person name="Snel B."/>
            <person name="Vilanova D."/>
            <person name="Berger B."/>
            <person name="Pessi G."/>
            <person name="Zwahlen M.-C."/>
            <person name="Desiere F."/>
            <person name="Bork P."/>
            <person name="Delley M."/>
            <person name="Pridmore R.D."/>
            <person name="Arigoni F."/>
        </authorList>
    </citation>
    <scope>NUCLEOTIDE SEQUENCE [LARGE SCALE GENOMIC DNA]</scope>
    <source>
        <strain>NCC 2705</strain>
    </source>
</reference>
<evidence type="ECO:0000255" key="1">
    <source>
        <dbReference type="HAMAP-Rule" id="MF_00012"/>
    </source>
</evidence>
<keyword id="KW-0001">2Fe-2S</keyword>
<keyword id="KW-0028">Amino-acid biosynthesis</keyword>
<keyword id="KW-0100">Branched-chain amino acid biosynthesis</keyword>
<keyword id="KW-0408">Iron</keyword>
<keyword id="KW-0411">Iron-sulfur</keyword>
<keyword id="KW-0456">Lyase</keyword>
<keyword id="KW-0460">Magnesium</keyword>
<keyword id="KW-0479">Metal-binding</keyword>
<keyword id="KW-1185">Reference proteome</keyword>
<comment type="function">
    <text evidence="1">Functions in the biosynthesis of branched-chain amino acids. Catalyzes the dehydration of (2R,3R)-2,3-dihydroxy-3-methylpentanoate (2,3-dihydroxy-3-methylvalerate) into 2-oxo-3-methylpentanoate (2-oxo-3-methylvalerate) and of (2R)-2,3-dihydroxy-3-methylbutanoate (2,3-dihydroxyisovalerate) into 2-oxo-3-methylbutanoate (2-oxoisovalerate), the penultimate precursor to L-isoleucine and L-valine, respectively.</text>
</comment>
<comment type="catalytic activity">
    <reaction evidence="1">
        <text>(2R)-2,3-dihydroxy-3-methylbutanoate = 3-methyl-2-oxobutanoate + H2O</text>
        <dbReference type="Rhea" id="RHEA:24809"/>
        <dbReference type="ChEBI" id="CHEBI:11851"/>
        <dbReference type="ChEBI" id="CHEBI:15377"/>
        <dbReference type="ChEBI" id="CHEBI:49072"/>
        <dbReference type="EC" id="4.2.1.9"/>
    </reaction>
    <physiologicalReaction direction="left-to-right" evidence="1">
        <dbReference type="Rhea" id="RHEA:24810"/>
    </physiologicalReaction>
</comment>
<comment type="catalytic activity">
    <reaction evidence="1">
        <text>(2R,3R)-2,3-dihydroxy-3-methylpentanoate = (S)-3-methyl-2-oxopentanoate + H2O</text>
        <dbReference type="Rhea" id="RHEA:27694"/>
        <dbReference type="ChEBI" id="CHEBI:15377"/>
        <dbReference type="ChEBI" id="CHEBI:35146"/>
        <dbReference type="ChEBI" id="CHEBI:49258"/>
        <dbReference type="EC" id="4.2.1.9"/>
    </reaction>
    <physiologicalReaction direction="left-to-right" evidence="1">
        <dbReference type="Rhea" id="RHEA:27695"/>
    </physiologicalReaction>
</comment>
<comment type="cofactor">
    <cofactor evidence="1">
        <name>[2Fe-2S] cluster</name>
        <dbReference type="ChEBI" id="CHEBI:190135"/>
    </cofactor>
    <text evidence="1">Binds 1 [2Fe-2S] cluster per subunit. This cluster acts as a Lewis acid cofactor.</text>
</comment>
<comment type="cofactor">
    <cofactor evidence="1">
        <name>Mg(2+)</name>
        <dbReference type="ChEBI" id="CHEBI:18420"/>
    </cofactor>
</comment>
<comment type="pathway">
    <text evidence="1">Amino-acid biosynthesis; L-isoleucine biosynthesis; L-isoleucine from 2-oxobutanoate: step 3/4.</text>
</comment>
<comment type="pathway">
    <text evidence="1">Amino-acid biosynthesis; L-valine biosynthesis; L-valine from pyruvate: step 3/4.</text>
</comment>
<comment type="subunit">
    <text evidence="1">Homodimer.</text>
</comment>
<comment type="similarity">
    <text evidence="1">Belongs to the IlvD/Edd family.</text>
</comment>
<accession>Q8G3H2</accession>
<dbReference type="EC" id="4.2.1.9" evidence="1"/>
<dbReference type="EMBL" id="AE014295">
    <property type="protein sequence ID" value="AAN25571.1"/>
    <property type="molecule type" value="Genomic_DNA"/>
</dbReference>
<dbReference type="RefSeq" id="NP_696935.1">
    <property type="nucleotide sequence ID" value="NC_004307.2"/>
</dbReference>
<dbReference type="RefSeq" id="WP_011068840.1">
    <property type="nucleotide sequence ID" value="NC_004307.2"/>
</dbReference>
<dbReference type="SMR" id="Q8G3H2"/>
<dbReference type="STRING" id="206672.BL1788"/>
<dbReference type="EnsemblBacteria" id="AAN25571">
    <property type="protein sequence ID" value="AAN25571"/>
    <property type="gene ID" value="BL1788"/>
</dbReference>
<dbReference type="KEGG" id="blo:BL1788"/>
<dbReference type="PATRIC" id="fig|206672.9.peg.1841"/>
<dbReference type="HOGENOM" id="CLU_014271_4_3_11"/>
<dbReference type="OrthoDB" id="9807077at2"/>
<dbReference type="PhylomeDB" id="Q8G3H2"/>
<dbReference type="UniPathway" id="UPA00047">
    <property type="reaction ID" value="UER00057"/>
</dbReference>
<dbReference type="UniPathway" id="UPA00049">
    <property type="reaction ID" value="UER00061"/>
</dbReference>
<dbReference type="Proteomes" id="UP000000439">
    <property type="component" value="Chromosome"/>
</dbReference>
<dbReference type="GO" id="GO:0005829">
    <property type="term" value="C:cytosol"/>
    <property type="evidence" value="ECO:0007669"/>
    <property type="project" value="TreeGrafter"/>
</dbReference>
<dbReference type="GO" id="GO:0051537">
    <property type="term" value="F:2 iron, 2 sulfur cluster binding"/>
    <property type="evidence" value="ECO:0007669"/>
    <property type="project" value="UniProtKB-UniRule"/>
</dbReference>
<dbReference type="GO" id="GO:0004160">
    <property type="term" value="F:dihydroxy-acid dehydratase activity"/>
    <property type="evidence" value="ECO:0007669"/>
    <property type="project" value="UniProtKB-UniRule"/>
</dbReference>
<dbReference type="GO" id="GO:0000287">
    <property type="term" value="F:magnesium ion binding"/>
    <property type="evidence" value="ECO:0007669"/>
    <property type="project" value="UniProtKB-UniRule"/>
</dbReference>
<dbReference type="GO" id="GO:0009097">
    <property type="term" value="P:isoleucine biosynthetic process"/>
    <property type="evidence" value="ECO:0007669"/>
    <property type="project" value="UniProtKB-UniRule"/>
</dbReference>
<dbReference type="GO" id="GO:0009099">
    <property type="term" value="P:L-valine biosynthetic process"/>
    <property type="evidence" value="ECO:0007669"/>
    <property type="project" value="UniProtKB-UniRule"/>
</dbReference>
<dbReference type="FunFam" id="3.50.30.80:FF:000001">
    <property type="entry name" value="Dihydroxy-acid dehydratase"/>
    <property type="match status" value="1"/>
</dbReference>
<dbReference type="Gene3D" id="3.50.30.80">
    <property type="entry name" value="IlvD/EDD C-terminal domain-like"/>
    <property type="match status" value="1"/>
</dbReference>
<dbReference type="HAMAP" id="MF_00012">
    <property type="entry name" value="IlvD"/>
    <property type="match status" value="1"/>
</dbReference>
<dbReference type="InterPro" id="IPR042096">
    <property type="entry name" value="Dihydro-acid_dehy_C"/>
</dbReference>
<dbReference type="InterPro" id="IPR004404">
    <property type="entry name" value="DihydroxyA_deHydtase"/>
</dbReference>
<dbReference type="InterPro" id="IPR020558">
    <property type="entry name" value="DiOHA_6PGluconate_deHydtase_CS"/>
</dbReference>
<dbReference type="InterPro" id="IPR056740">
    <property type="entry name" value="ILV_EDD_C"/>
</dbReference>
<dbReference type="InterPro" id="IPR000581">
    <property type="entry name" value="ILV_EDD_N"/>
</dbReference>
<dbReference type="InterPro" id="IPR037237">
    <property type="entry name" value="IlvD/EDD_N"/>
</dbReference>
<dbReference type="NCBIfam" id="TIGR00110">
    <property type="entry name" value="ilvD"/>
    <property type="match status" value="1"/>
</dbReference>
<dbReference type="NCBIfam" id="NF009103">
    <property type="entry name" value="PRK12448.1"/>
    <property type="match status" value="1"/>
</dbReference>
<dbReference type="PANTHER" id="PTHR43661">
    <property type="entry name" value="D-XYLONATE DEHYDRATASE"/>
    <property type="match status" value="1"/>
</dbReference>
<dbReference type="PANTHER" id="PTHR43661:SF3">
    <property type="entry name" value="D-XYLONATE DEHYDRATASE YAGF-RELATED"/>
    <property type="match status" value="1"/>
</dbReference>
<dbReference type="Pfam" id="PF24877">
    <property type="entry name" value="ILV_EDD_C"/>
    <property type="match status" value="1"/>
</dbReference>
<dbReference type="Pfam" id="PF00920">
    <property type="entry name" value="ILVD_EDD_N"/>
    <property type="match status" value="1"/>
</dbReference>
<dbReference type="SUPFAM" id="SSF143975">
    <property type="entry name" value="IlvD/EDD N-terminal domain-like"/>
    <property type="match status" value="1"/>
</dbReference>
<dbReference type="SUPFAM" id="SSF52016">
    <property type="entry name" value="LeuD/IlvD-like"/>
    <property type="match status" value="1"/>
</dbReference>
<dbReference type="PROSITE" id="PS00886">
    <property type="entry name" value="ILVD_EDD_1"/>
    <property type="match status" value="1"/>
</dbReference>
<dbReference type="PROSITE" id="PS00887">
    <property type="entry name" value="ILVD_EDD_2"/>
    <property type="match status" value="1"/>
</dbReference>
<feature type="chain" id="PRO_0000103433" description="Dihydroxy-acid dehydratase">
    <location>
        <begin position="1"/>
        <end position="620"/>
    </location>
</feature>
<feature type="active site" description="Proton acceptor" evidence="1">
    <location>
        <position position="519"/>
    </location>
</feature>
<feature type="binding site" evidence="1">
    <location>
        <position position="82"/>
    </location>
    <ligand>
        <name>Mg(2+)</name>
        <dbReference type="ChEBI" id="CHEBI:18420"/>
    </ligand>
</feature>
<feature type="binding site" evidence="1">
    <location>
        <position position="123"/>
    </location>
    <ligand>
        <name>[2Fe-2S] cluster</name>
        <dbReference type="ChEBI" id="CHEBI:190135"/>
    </ligand>
</feature>
<feature type="binding site" evidence="1">
    <location>
        <position position="124"/>
    </location>
    <ligand>
        <name>Mg(2+)</name>
        <dbReference type="ChEBI" id="CHEBI:18420"/>
    </ligand>
</feature>
<feature type="binding site" description="via carbamate group" evidence="1">
    <location>
        <position position="125"/>
    </location>
    <ligand>
        <name>Mg(2+)</name>
        <dbReference type="ChEBI" id="CHEBI:18420"/>
    </ligand>
</feature>
<feature type="binding site" evidence="1">
    <location>
        <position position="197"/>
    </location>
    <ligand>
        <name>[2Fe-2S] cluster</name>
        <dbReference type="ChEBI" id="CHEBI:190135"/>
    </ligand>
</feature>
<feature type="binding site" evidence="1">
    <location>
        <position position="493"/>
    </location>
    <ligand>
        <name>Mg(2+)</name>
        <dbReference type="ChEBI" id="CHEBI:18420"/>
    </ligand>
</feature>
<feature type="modified residue" description="N6-carboxylysine" evidence="1">
    <location>
        <position position="125"/>
    </location>
</feature>